<reference key="1">
    <citation type="journal article" date="2008" name="J. Bacteriol.">
        <title>The complete genome sequence of Escherichia coli DH10B: insights into the biology of a laboratory workhorse.</title>
        <authorList>
            <person name="Durfee T."/>
            <person name="Nelson R."/>
            <person name="Baldwin S."/>
            <person name="Plunkett G. III"/>
            <person name="Burland V."/>
            <person name="Mau B."/>
            <person name="Petrosino J.F."/>
            <person name="Qin X."/>
            <person name="Muzny D.M."/>
            <person name="Ayele M."/>
            <person name="Gibbs R.A."/>
            <person name="Csorgo B."/>
            <person name="Posfai G."/>
            <person name="Weinstock G.M."/>
            <person name="Blattner F.R."/>
        </authorList>
    </citation>
    <scope>NUCLEOTIDE SEQUENCE [LARGE SCALE GENOMIC DNA]</scope>
    <source>
        <strain>K12 / DH10B</strain>
    </source>
</reference>
<organism>
    <name type="scientific">Escherichia coli (strain K12 / DH10B)</name>
    <dbReference type="NCBI Taxonomy" id="316385"/>
    <lineage>
        <taxon>Bacteria</taxon>
        <taxon>Pseudomonadati</taxon>
        <taxon>Pseudomonadota</taxon>
        <taxon>Gammaproteobacteria</taxon>
        <taxon>Enterobacterales</taxon>
        <taxon>Enterobacteriaceae</taxon>
        <taxon>Escherichia</taxon>
    </lineage>
</organism>
<gene>
    <name evidence="1" type="primary">yjhX</name>
    <name type="ordered locus">ECDH10B_4510</name>
</gene>
<protein>
    <recommendedName>
        <fullName evidence="1">UPF0386 protein YjhX</fullName>
    </recommendedName>
</protein>
<feature type="chain" id="PRO_0000352170" description="UPF0386 protein YjhX">
    <location>
        <begin position="1"/>
        <end position="85"/>
    </location>
</feature>
<name>YJHX_ECODH</name>
<sequence>MNLSRQEQHTLHVLAKGRRIAHVRDSSGRVTSVECYSREGLLLTDCTLAVFKKLKTKKLIKSVNGQPYRINTTELNKVRAQLDNR</sequence>
<proteinExistence type="inferred from homology"/>
<comment type="similarity">
    <text evidence="1">Belongs to the UPF0386 family.</text>
</comment>
<dbReference type="EMBL" id="CP000948">
    <property type="protein sequence ID" value="ACB05285.1"/>
    <property type="molecule type" value="Genomic_DNA"/>
</dbReference>
<dbReference type="RefSeq" id="WP_001054376.1">
    <property type="nucleotide sequence ID" value="NC_010473.1"/>
</dbReference>
<dbReference type="KEGG" id="ecd:ECDH10B_4510"/>
<dbReference type="HOGENOM" id="CLU_164736_0_0_6"/>
<dbReference type="HAMAP" id="MF_00827">
    <property type="entry name" value="UPF0386"/>
    <property type="match status" value="1"/>
</dbReference>
<dbReference type="InterPro" id="IPR018654">
    <property type="entry name" value="YjhX_toxin"/>
</dbReference>
<dbReference type="NCBIfam" id="NF010240">
    <property type="entry name" value="PRK13687.1"/>
    <property type="match status" value="1"/>
</dbReference>
<dbReference type="Pfam" id="PF09857">
    <property type="entry name" value="YjhX_toxin"/>
    <property type="match status" value="1"/>
</dbReference>
<evidence type="ECO:0000255" key="1">
    <source>
        <dbReference type="HAMAP-Rule" id="MF_00827"/>
    </source>
</evidence>
<accession>B1XET3</accession>